<organism>
    <name type="scientific">Salmonella typhi</name>
    <dbReference type="NCBI Taxonomy" id="90370"/>
    <lineage>
        <taxon>Bacteria</taxon>
        <taxon>Pseudomonadati</taxon>
        <taxon>Pseudomonadota</taxon>
        <taxon>Gammaproteobacteria</taxon>
        <taxon>Enterobacterales</taxon>
        <taxon>Enterobacteriaceae</taxon>
        <taxon>Salmonella</taxon>
    </lineage>
</organism>
<feature type="chain" id="PRO_0000197874" description="Exodeoxyribonuclease 7 large subunit">
    <location>
        <begin position="1"/>
        <end position="449"/>
    </location>
</feature>
<keyword id="KW-0963">Cytoplasm</keyword>
<keyword id="KW-0269">Exonuclease</keyword>
<keyword id="KW-0378">Hydrolase</keyword>
<keyword id="KW-0540">Nuclease</keyword>
<name>EX7L_SALTI</name>
<sequence>MLSSQTSSIFTVSRLNQTVRLLLEQEMGQVWISGEISNFTQPASGHWYFTLKDDTAQVRCAMFRNSNRRVTFRPQHGQQVLVRANITLYEPRGDYQIIAESMQPAGEGLLQQKYEQLKAKLHAEGLFDQQHKQPLPSPAHCVGVITSKTGAALHDILHVLKRRDPSLPVIIYPTAVQGDDAPGQIVRAIELANTRGECDVLIVGRGGGSLEDLWSFNDERVARAIFASRIPVVSAVGHETDVTIADFVADLRAPTPSAAAEIVSRNQQELLRQIQSAQQRLGMAMDYYLANRSRRFTQIFHRLQQQHPQLRLARQQTALERLRQRMGFALEARIKQATQRQQRVSQRLSQQNPQPRIHRVQSRIQQLEYRLTENIRSRLSEQRERFGNAVTHLEAVSPLATLARGYTVSTTTDGKVLKKIKQVKAGDIMTTRLEDGWLESEVKSVTPGT</sequence>
<reference key="1">
    <citation type="journal article" date="2001" name="Nature">
        <title>Complete genome sequence of a multiple drug resistant Salmonella enterica serovar Typhi CT18.</title>
        <authorList>
            <person name="Parkhill J."/>
            <person name="Dougan G."/>
            <person name="James K.D."/>
            <person name="Thomson N.R."/>
            <person name="Pickard D."/>
            <person name="Wain J."/>
            <person name="Churcher C.M."/>
            <person name="Mungall K.L."/>
            <person name="Bentley S.D."/>
            <person name="Holden M.T.G."/>
            <person name="Sebaihia M."/>
            <person name="Baker S."/>
            <person name="Basham D."/>
            <person name="Brooks K."/>
            <person name="Chillingworth T."/>
            <person name="Connerton P."/>
            <person name="Cronin A."/>
            <person name="Davis P."/>
            <person name="Davies R.M."/>
            <person name="Dowd L."/>
            <person name="White N."/>
            <person name="Farrar J."/>
            <person name="Feltwell T."/>
            <person name="Hamlin N."/>
            <person name="Haque A."/>
            <person name="Hien T.T."/>
            <person name="Holroyd S."/>
            <person name="Jagels K."/>
            <person name="Krogh A."/>
            <person name="Larsen T.S."/>
            <person name="Leather S."/>
            <person name="Moule S."/>
            <person name="O'Gaora P."/>
            <person name="Parry C."/>
            <person name="Quail M.A."/>
            <person name="Rutherford K.M."/>
            <person name="Simmonds M."/>
            <person name="Skelton J."/>
            <person name="Stevens K."/>
            <person name="Whitehead S."/>
            <person name="Barrell B.G."/>
        </authorList>
    </citation>
    <scope>NUCLEOTIDE SEQUENCE [LARGE SCALE GENOMIC DNA]</scope>
    <source>
        <strain>CT18</strain>
    </source>
</reference>
<reference key="2">
    <citation type="journal article" date="2003" name="J. Bacteriol.">
        <title>Comparative genomics of Salmonella enterica serovar Typhi strains Ty2 and CT18.</title>
        <authorList>
            <person name="Deng W."/>
            <person name="Liou S.-R."/>
            <person name="Plunkett G. III"/>
            <person name="Mayhew G.F."/>
            <person name="Rose D.J."/>
            <person name="Burland V."/>
            <person name="Kodoyianni V."/>
            <person name="Schwartz D.C."/>
            <person name="Blattner F.R."/>
        </authorList>
    </citation>
    <scope>NUCLEOTIDE SEQUENCE [LARGE SCALE GENOMIC DNA]</scope>
    <source>
        <strain>ATCC 700931 / Ty2</strain>
    </source>
</reference>
<proteinExistence type="inferred from homology"/>
<evidence type="ECO:0000255" key="1">
    <source>
        <dbReference type="HAMAP-Rule" id="MF_00378"/>
    </source>
</evidence>
<accession>Q8Z4Q1</accession>
<protein>
    <recommendedName>
        <fullName evidence="1">Exodeoxyribonuclease 7 large subunit</fullName>
        <ecNumber evidence="1">3.1.11.6</ecNumber>
    </recommendedName>
    <alternativeName>
        <fullName evidence="1">Exodeoxyribonuclease VII large subunit</fullName>
        <shortName evidence="1">Exonuclease VII large subunit</shortName>
    </alternativeName>
</protein>
<gene>
    <name evidence="1" type="primary">xseA</name>
    <name type="ordered locus">STY2753</name>
    <name type="ordered locus">t0345</name>
</gene>
<dbReference type="EC" id="3.1.11.6" evidence="1"/>
<dbReference type="EMBL" id="AL513382">
    <property type="protein sequence ID" value="CAD02714.1"/>
    <property type="molecule type" value="Genomic_DNA"/>
</dbReference>
<dbReference type="EMBL" id="AE014613">
    <property type="protein sequence ID" value="AAO68065.1"/>
    <property type="molecule type" value="Genomic_DNA"/>
</dbReference>
<dbReference type="RefSeq" id="NP_457046.1">
    <property type="nucleotide sequence ID" value="NC_003198.1"/>
</dbReference>
<dbReference type="RefSeq" id="WP_000953156.1">
    <property type="nucleotide sequence ID" value="NZ_WSUR01000007.1"/>
</dbReference>
<dbReference type="SMR" id="Q8Z4Q1"/>
<dbReference type="STRING" id="220341.gene:17586648"/>
<dbReference type="KEGG" id="stt:t0345"/>
<dbReference type="KEGG" id="sty:STY2753"/>
<dbReference type="PATRIC" id="fig|220341.7.peg.2792"/>
<dbReference type="eggNOG" id="COG1570">
    <property type="taxonomic scope" value="Bacteria"/>
</dbReference>
<dbReference type="HOGENOM" id="CLU_023625_3_1_6"/>
<dbReference type="OMA" id="WPAVRFE"/>
<dbReference type="OrthoDB" id="9802795at2"/>
<dbReference type="Proteomes" id="UP000000541">
    <property type="component" value="Chromosome"/>
</dbReference>
<dbReference type="Proteomes" id="UP000002670">
    <property type="component" value="Chromosome"/>
</dbReference>
<dbReference type="GO" id="GO:0005737">
    <property type="term" value="C:cytoplasm"/>
    <property type="evidence" value="ECO:0007669"/>
    <property type="project" value="UniProtKB-SubCell"/>
</dbReference>
<dbReference type="GO" id="GO:0009318">
    <property type="term" value="C:exodeoxyribonuclease VII complex"/>
    <property type="evidence" value="ECO:0007669"/>
    <property type="project" value="InterPro"/>
</dbReference>
<dbReference type="GO" id="GO:0008855">
    <property type="term" value="F:exodeoxyribonuclease VII activity"/>
    <property type="evidence" value="ECO:0007669"/>
    <property type="project" value="UniProtKB-UniRule"/>
</dbReference>
<dbReference type="GO" id="GO:0003676">
    <property type="term" value="F:nucleic acid binding"/>
    <property type="evidence" value="ECO:0007669"/>
    <property type="project" value="InterPro"/>
</dbReference>
<dbReference type="GO" id="GO:0006308">
    <property type="term" value="P:DNA catabolic process"/>
    <property type="evidence" value="ECO:0007669"/>
    <property type="project" value="UniProtKB-UniRule"/>
</dbReference>
<dbReference type="CDD" id="cd04489">
    <property type="entry name" value="ExoVII_LU_OBF"/>
    <property type="match status" value="1"/>
</dbReference>
<dbReference type="HAMAP" id="MF_00378">
    <property type="entry name" value="Exonuc_7_L"/>
    <property type="match status" value="1"/>
</dbReference>
<dbReference type="InterPro" id="IPR003753">
    <property type="entry name" value="Exonuc_VII_L"/>
</dbReference>
<dbReference type="InterPro" id="IPR020579">
    <property type="entry name" value="Exonuc_VII_lsu_C"/>
</dbReference>
<dbReference type="InterPro" id="IPR025824">
    <property type="entry name" value="OB-fold_nuc-bd_dom"/>
</dbReference>
<dbReference type="NCBIfam" id="TIGR00237">
    <property type="entry name" value="xseA"/>
    <property type="match status" value="1"/>
</dbReference>
<dbReference type="PANTHER" id="PTHR30008">
    <property type="entry name" value="EXODEOXYRIBONUCLEASE 7 LARGE SUBUNIT"/>
    <property type="match status" value="1"/>
</dbReference>
<dbReference type="PANTHER" id="PTHR30008:SF0">
    <property type="entry name" value="EXODEOXYRIBONUCLEASE 7 LARGE SUBUNIT"/>
    <property type="match status" value="1"/>
</dbReference>
<dbReference type="Pfam" id="PF02601">
    <property type="entry name" value="Exonuc_VII_L"/>
    <property type="match status" value="1"/>
</dbReference>
<dbReference type="Pfam" id="PF13742">
    <property type="entry name" value="tRNA_anti_2"/>
    <property type="match status" value="1"/>
</dbReference>
<comment type="function">
    <text evidence="1">Bidirectionally degrades single-stranded DNA into large acid-insoluble oligonucleotides, which are then degraded further into small acid-soluble oligonucleotides.</text>
</comment>
<comment type="catalytic activity">
    <reaction evidence="1">
        <text>Exonucleolytic cleavage in either 5'- to 3'- or 3'- to 5'-direction to yield nucleoside 5'-phosphates.</text>
        <dbReference type="EC" id="3.1.11.6"/>
    </reaction>
</comment>
<comment type="subunit">
    <text evidence="1">Heterooligomer composed of large and small subunits.</text>
</comment>
<comment type="subcellular location">
    <subcellularLocation>
        <location evidence="1">Cytoplasm</location>
    </subcellularLocation>
</comment>
<comment type="similarity">
    <text evidence="1">Belongs to the XseA family.</text>
</comment>